<feature type="initiator methionine" description="Removed; by host" evidence="4">
    <location>
        <position position="1"/>
    </location>
</feature>
<feature type="chain" id="PRO_0000038099" description="Large envelope protein" evidence="4">
    <location>
        <begin position="2"/>
        <end position="389"/>
    </location>
</feature>
<feature type="topological domain" description="Intravirion; in internal conformation" evidence="4">
    <location>
        <begin position="2"/>
        <end position="242"/>
    </location>
</feature>
<feature type="topological domain" description="Virion surface; in external conformation" evidence="4">
    <location>
        <begin position="2"/>
        <end position="170"/>
    </location>
</feature>
<feature type="transmembrane region" description="Helical; Name=TM1; Note=In external conformation" evidence="4">
    <location>
        <begin position="171"/>
        <end position="191"/>
    </location>
</feature>
<feature type="topological domain" description="Intravirion; in external conformation" evidence="4">
    <location>
        <begin position="192"/>
        <end position="242"/>
    </location>
</feature>
<feature type="transmembrane region" description="Helical; Name=TM2" evidence="4">
    <location>
        <begin position="243"/>
        <end position="263"/>
    </location>
</feature>
<feature type="topological domain" description="Virion surface" evidence="4">
    <location>
        <begin position="264"/>
        <end position="337"/>
    </location>
</feature>
<feature type="transmembrane region" description="Helical" evidence="4">
    <location>
        <begin position="338"/>
        <end position="358"/>
    </location>
</feature>
<feature type="topological domain" description="Intravirion" evidence="4">
    <location>
        <begin position="359"/>
        <end position="364"/>
    </location>
</feature>
<feature type="transmembrane region" description="Helical; Name=TM3" evidence="4">
    <location>
        <begin position="365"/>
        <end position="387"/>
    </location>
</feature>
<feature type="topological domain" description="Virion surface" evidence="4">
    <location>
        <begin position="388"/>
        <end position="389"/>
    </location>
</feature>
<feature type="region of interest" description="Pre-S" evidence="4">
    <location>
        <begin position="2"/>
        <end position="163"/>
    </location>
</feature>
<feature type="region of interest" description="Pre-S1" evidence="4">
    <location>
        <begin position="2"/>
        <end position="108"/>
    </location>
</feature>
<feature type="region of interest" description="Pre-S2" evidence="4">
    <location>
        <begin position="109"/>
        <end position="163"/>
    </location>
</feature>
<feature type="lipid moiety-binding region" description="N-myristoyl glycine; by host" evidence="4">
    <location>
        <position position="2"/>
    </location>
</feature>
<feature type="glycosylation site" description="N-linked (GlcNAc...) asparagine; by host" evidence="4">
    <location>
        <position position="309"/>
    </location>
</feature>
<feature type="splice variant" id="VSP_031369" description="In isoform S." evidence="5">
    <location>
        <begin position="1"/>
        <end position="163"/>
    </location>
</feature>
<feature type="splice variant" id="VSP_031370" description="In isoform M." evidence="5">
    <location>
        <begin position="1"/>
        <end position="108"/>
    </location>
</feature>
<feature type="modified residue" description="N-acetylmethionine" evidence="1">
    <location sequence="P17397-2">
        <position position="1"/>
    </location>
</feature>
<accession>P17397</accession>
<dbReference type="EMBL" id="D00331">
    <property type="status" value="NOT_ANNOTATED_CDS"/>
    <property type="molecule type" value="Genomic_DNA"/>
</dbReference>
<dbReference type="PIR" id="I28925">
    <property type="entry name" value="SAVLJ3"/>
</dbReference>
<dbReference type="SMR" id="P17397"/>
<dbReference type="GlyCosmos" id="P17397">
    <property type="glycosylation" value="1 site, No reported glycans"/>
</dbReference>
<dbReference type="Proteomes" id="UP000007914">
    <property type="component" value="Genome"/>
</dbReference>
<dbReference type="GO" id="GO:0016020">
    <property type="term" value="C:membrane"/>
    <property type="evidence" value="ECO:0007669"/>
    <property type="project" value="UniProtKB-UniRule"/>
</dbReference>
<dbReference type="GO" id="GO:0019031">
    <property type="term" value="C:viral envelope"/>
    <property type="evidence" value="ECO:0007669"/>
    <property type="project" value="UniProtKB-KW"/>
</dbReference>
<dbReference type="GO" id="GO:0055036">
    <property type="term" value="C:virion membrane"/>
    <property type="evidence" value="ECO:0007669"/>
    <property type="project" value="UniProtKB-SubCell"/>
</dbReference>
<dbReference type="GO" id="GO:0075513">
    <property type="term" value="P:caveolin-mediated endocytosis of virus by host cell"/>
    <property type="evidence" value="ECO:0007669"/>
    <property type="project" value="UniProtKB-KW"/>
</dbReference>
<dbReference type="GO" id="GO:0039654">
    <property type="term" value="P:fusion of virus membrane with host endosome membrane"/>
    <property type="evidence" value="ECO:0007669"/>
    <property type="project" value="UniProtKB-KW"/>
</dbReference>
<dbReference type="GO" id="GO:0019062">
    <property type="term" value="P:virion attachment to host cell"/>
    <property type="evidence" value="ECO:0007669"/>
    <property type="project" value="UniProtKB-UniRule"/>
</dbReference>
<dbReference type="HAMAP" id="MF_04075">
    <property type="entry name" value="HBV_HBSAG"/>
    <property type="match status" value="1"/>
</dbReference>
<dbReference type="InterPro" id="IPR000349">
    <property type="entry name" value="HBV_HBSAG"/>
</dbReference>
<dbReference type="Pfam" id="PF00695">
    <property type="entry name" value="vMSA"/>
    <property type="match status" value="1"/>
</dbReference>
<keyword id="KW-0007">Acetylation</keyword>
<keyword id="KW-0024">Alternative initiation</keyword>
<keyword id="KW-0025">Alternative splicing</keyword>
<keyword id="KW-1166">Caveolin-mediated endocytosis of virus by host</keyword>
<keyword id="KW-1170">Fusion of virus membrane with host endosomal membrane</keyword>
<keyword id="KW-1168">Fusion of virus membrane with host membrane</keyword>
<keyword id="KW-0325">Glycoprotein</keyword>
<keyword id="KW-0945">Host-virus interaction</keyword>
<keyword id="KW-0449">Lipoprotein</keyword>
<keyword id="KW-0472">Membrane</keyword>
<keyword id="KW-0519">Myristate</keyword>
<keyword id="KW-0812">Transmembrane</keyword>
<keyword id="KW-1133">Transmembrane helix</keyword>
<keyword id="KW-1161">Viral attachment to host cell</keyword>
<keyword id="KW-0261">Viral envelope protein</keyword>
<keyword id="KW-1162">Viral penetration into host cytoplasm</keyword>
<keyword id="KW-0946">Virion</keyword>
<keyword id="KW-1164">Virus endocytosis by host</keyword>
<keyword id="KW-1160">Virus entry into host cell</keyword>
<evidence type="ECO:0000250" key="1">
    <source>
        <dbReference type="UniProtKB" id="P03138"/>
    </source>
</evidence>
<evidence type="ECO:0000250" key="2">
    <source>
        <dbReference type="UniProtKB" id="P03141"/>
    </source>
</evidence>
<evidence type="ECO:0000250" key="3">
    <source>
        <dbReference type="UniProtKB" id="Q9PWW3"/>
    </source>
</evidence>
<evidence type="ECO:0000255" key="4">
    <source>
        <dbReference type="HAMAP-Rule" id="MF_04075"/>
    </source>
</evidence>
<evidence type="ECO:0000305" key="5"/>
<gene>
    <name evidence="4" type="primary">S</name>
</gene>
<sequence>MGTNLSVPNPLGFFPDHQLDPAFKANSDNPDWDLNPHKDNWPDSNKVGVGAFGPGFTPPHGGLLGWSPQAQGILTTVPTAPPPASTNRQLGRKPTPLSPPLRDTHPQAMQWNSTTFHQTLQDPRVRALYFPAGGSSSGTVNPVQNTASSISSILSTTGDPVPNMENIASGLLGPLLVLQAGFFSLTKILTIPLSLDSWWTSLNFLGETPVCLGQNSQSQISSHSPTCCPPICPGYRWMCLRRFIIFLCILLLCLIFLLVLLDYQGMLPVCPLIPGSSTTSTGPCKTCTTPAQGTSMFPSCCCTKPTDGNCTCIPIPSSWAFAKYLWEWASVRFSWLSLLVPFVQWFVGLSPTVWLSVIWMMWFWGPSLYNILSPFMPLLPIFFCLWVYI</sequence>
<name>HBSAG_HBVB2</name>
<proteinExistence type="evidence at protein level"/>
<protein>
    <recommendedName>
        <fullName evidence="4">Large envelope protein</fullName>
    </recommendedName>
    <alternativeName>
        <fullName evidence="4">L glycoprotein</fullName>
    </alternativeName>
    <alternativeName>
        <fullName evidence="4">L-HBsAg</fullName>
        <shortName evidence="4">LHB</shortName>
    </alternativeName>
    <alternativeName>
        <fullName evidence="4">Large S protein</fullName>
    </alternativeName>
    <alternativeName>
        <fullName evidence="4">Large surface protein</fullName>
    </alternativeName>
    <alternativeName>
        <fullName evidence="4">Major surface antigen</fullName>
    </alternativeName>
</protein>
<organism>
    <name type="scientific">Hepatitis B virus genotype B2 (isolate Indonesia/pIDW420/1988)</name>
    <name type="common">HBV-B</name>
    <dbReference type="NCBI Taxonomy" id="10412"/>
    <lineage>
        <taxon>Viruses</taxon>
        <taxon>Riboviria</taxon>
        <taxon>Pararnavirae</taxon>
        <taxon>Artverviricota</taxon>
        <taxon>Revtraviricetes</taxon>
        <taxon>Blubervirales</taxon>
        <taxon>Hepadnaviridae</taxon>
        <taxon>Orthohepadnavirus</taxon>
        <taxon>Hepatitis B virus</taxon>
    </lineage>
</organism>
<reference key="1">
    <citation type="journal article" date="1988" name="J. Gen. Virol.">
        <title>Typing hepatitis B virus by homology in nucleotide sequence: comparison of surface antigen subtypes.</title>
        <authorList>
            <person name="Okamoto H."/>
            <person name="Tsuda F."/>
            <person name="Sakugawa H."/>
            <person name="Sastrosoewignjo R.I."/>
            <person name="Imai M."/>
            <person name="Miyakawa Y."/>
            <person name="Mayumi M."/>
        </authorList>
    </citation>
    <scope>NUCLEOTIDE SEQUENCE [GENOMIC DNA]</scope>
</reference>
<reference key="2">
    <citation type="journal article" date="1996" name="Intervirology">
        <title>Functions of the large hepatitis B virus surface protein in viral particle morphogenesis.</title>
        <authorList>
            <person name="Bruss V."/>
            <person name="Gerhardt E."/>
            <person name="Vieluf K."/>
            <person name="Wunderlich G."/>
        </authorList>
    </citation>
    <scope>REVIEW</scope>
</reference>
<reference key="3">
    <citation type="journal article" date="1998" name="Adv. Exp. Med. Biol.">
        <title>Role of glycan processing in hepatitis B virus envelope protein trafficking.</title>
        <authorList>
            <person name="Block T.M."/>
            <person name="Lu X."/>
            <person name="Mehta A."/>
            <person name="Park J."/>
            <person name="Blumberg B.S."/>
            <person name="Dwek R."/>
        </authorList>
    </citation>
    <scope>REVIEW</scope>
</reference>
<reference key="4">
    <citation type="journal article" date="2004" name="Virus Res.">
        <title>Envelopment of the hepatitis B virus nucleocapsid.</title>
        <authorList>
            <person name="Bruss V."/>
        </authorList>
    </citation>
    <scope>REVIEW</scope>
</reference>
<reference key="5">
    <citation type="journal article" date="2006" name="Cancer Sci.">
        <title>Hepatitis B virus pre-S mutants, endoplasmic reticulum stress and hepatocarcinogenesis.</title>
        <authorList>
            <person name="Wang H.C."/>
            <person name="Huang W."/>
            <person name="Lai M.D."/>
            <person name="Su I.J."/>
        </authorList>
    </citation>
    <scope>REVIEW</scope>
</reference>
<organismHost>
    <name type="scientific">Homo sapiens</name>
    <name type="common">Human</name>
    <dbReference type="NCBI Taxonomy" id="9606"/>
</organismHost>
<organismHost>
    <name type="scientific">Pan troglodytes</name>
    <name type="common">Chimpanzee</name>
    <dbReference type="NCBI Taxonomy" id="9598"/>
</organismHost>
<comment type="function">
    <text evidence="4">The large envelope protein exists in two topological conformations, one which is termed 'external' or Le-HBsAg and the other 'internal' or Li-HBsAg. In its external conformation the protein attaches the virus to cell receptors and thereby initiating infection. This interaction determines the species specificity and liver tropism. This attachment induces virion internalization predominantly through caveolin-mediated endocytosis. The large envelope protein also assures fusion between virion membrane and endosomal membrane. In its internal conformation the protein plays a role in virion morphogenesis and mediates the contact with the nucleocapsid like a matrix protein.</text>
</comment>
<comment type="function">
    <text evidence="4">The middle envelope protein plays an important role in the budding of the virion. It is involved in the induction of budding in a nucleocapsid independent way. In this process the majority of envelope proteins bud to form subviral lipoprotein particles of 22 nm of diameter that do not contain a nucleocapsid.</text>
</comment>
<comment type="subunit">
    <text evidence="3">Interacts (via its myristoylated pre-S1 region) with the host SLC10A1/NTCP; this interaction is essential for viral entry.</text>
</comment>
<comment type="subunit">
    <molecule>Isoform L</molecule>
    <text evidence="2">In its internal form (Li-HBsAg), interacts with the capsid protein and with the isoform S. Interacts with host chaperone CANX.</text>
</comment>
<comment type="subunit">
    <molecule>Isoform M</molecule>
    <text evidence="2">Associates with host chaperone CANX through its pre-S2 N glycan; this association may be essential for isoform M proper secretion.</text>
</comment>
<comment type="subunit">
    <molecule>Isoform S</molecule>
    <text evidence="2">Interacts with isoform L. Interacts with the antigens of satellite virus HDV (HDVAgs); this interaction is required for encapsidation of HDV genomic RNA.</text>
</comment>
<comment type="subcellular location">
    <subcellularLocation>
        <location evidence="4">Virion membrane</location>
    </subcellularLocation>
</comment>
<comment type="alternative products">
    <event type="alternative splicing"/>
    <event type="alternative initiation"/>
    <isoform>
        <id>P17397-1</id>
        <name>L</name>
        <name>Large envelope protein</name>
        <name>LHB</name>
        <name>L-HBsAg</name>
        <sequence type="displayed"/>
    </isoform>
    <isoform>
        <id>P17397-2</id>
        <name>M</name>
        <name>Middle envelope protein</name>
        <name>MHB</name>
        <name>M-HBsAg</name>
        <sequence type="described" ref="VSP_031370"/>
    </isoform>
    <isoform>
        <id>P17397-3</id>
        <name>S</name>
        <name>Small envelope protein</name>
        <name>SHB</name>
        <name>S-HBsAg</name>
        <sequence type="described" ref="VSP_031369"/>
    </isoform>
</comment>
<comment type="domain">
    <text evidence="4">The large envelope protein is synthesized with the pre-S region at the cytosolic side of the endoplasmic reticulum and, hence will be within the virion after budding. Therefore the pre-S region is not N-glycosylated. Later a post-translational translocation of N-terminal pre-S and TM1 domains occur in about 50% of proteins at the virion surface. These molecules change their topology by an unknown mechanism, resulting in exposure of pre-S region at virion surface. For isoform M in contrast, the pre-S2 region is translocated cotranslationally to the endoplasmic reticulum lumen and is N-glycosylated.</text>
</comment>
<comment type="PTM">
    <text evidence="1 4">Isoform M is N-terminally acetylated by host at a ratio of 90%, and N-glycosylated by host at the pre-S2 region.</text>
</comment>
<comment type="PTM">
    <text evidence="3 4">Myristoylated; this modification is essential for its interaction with the host protein SLC10A1/NTCP.</text>
</comment>
<comment type="biotechnology">
    <text>Systematic vaccination of individuals at risk of exposure to the virus has been the main method of controlling the morbidity and mortality associated with hepatitis B. The first hepatitis B vaccine was manufactured by the purification and inactivation of HBsAg obtained from the plasma of chronic hepatitis B virus carriers. The vaccine is now produced by recombinant DNA techniques and expression of the S isoform in yeast cells. The pre-S region do not seem to induce strong enough antigenic response.</text>
</comment>
<comment type="similarity">
    <text evidence="4">Belongs to the orthohepadnavirus major surface antigen family.</text>
</comment>